<reference key="1">
    <citation type="journal article" date="2010" name="Genome Biol.">
        <title>Structure and dynamics of the pan-genome of Streptococcus pneumoniae and closely related species.</title>
        <authorList>
            <person name="Donati C."/>
            <person name="Hiller N.L."/>
            <person name="Tettelin H."/>
            <person name="Muzzi A."/>
            <person name="Croucher N.J."/>
            <person name="Angiuoli S.V."/>
            <person name="Oggioni M."/>
            <person name="Dunning Hotopp J.C."/>
            <person name="Hu F.Z."/>
            <person name="Riley D.R."/>
            <person name="Covacci A."/>
            <person name="Mitchell T.J."/>
            <person name="Bentley S.D."/>
            <person name="Kilian M."/>
            <person name="Ehrlich G.D."/>
            <person name="Rappuoli R."/>
            <person name="Moxon E.R."/>
            <person name="Masignani V."/>
        </authorList>
    </citation>
    <scope>NUCLEOTIDE SEQUENCE [LARGE SCALE GENOMIC DNA]</scope>
    <source>
        <strain>Taiwan19F-14</strain>
    </source>
</reference>
<comment type="subunit">
    <text evidence="1">Part of the 50S ribosomal subunit.</text>
</comment>
<comment type="similarity">
    <text evidence="1">Belongs to the bacterial ribosomal protein bL31 family. Type B subfamily.</text>
</comment>
<keyword id="KW-0687">Ribonucleoprotein</keyword>
<keyword id="KW-0689">Ribosomal protein</keyword>
<sequence length="80" mass="9358">MKKDIHPEYRPVVFMDTTTGYQFLSGSTKRSNETVEFEGETYPLIRVEISSDSHPFYTGRQKFTQADGRVDRFNKKYGLK</sequence>
<gene>
    <name evidence="1" type="primary">rpmE2</name>
    <name type="ordered locus">SPT_0927</name>
</gene>
<protein>
    <recommendedName>
        <fullName evidence="1">Large ribosomal subunit protein bL31B</fullName>
    </recommendedName>
    <alternativeName>
        <fullName evidence="2">50S ribosomal protein L31 type B</fullName>
    </alternativeName>
</protein>
<organism>
    <name type="scientific">Streptococcus pneumoniae (strain Taiwan19F-14)</name>
    <dbReference type="NCBI Taxonomy" id="487213"/>
    <lineage>
        <taxon>Bacteria</taxon>
        <taxon>Bacillati</taxon>
        <taxon>Bacillota</taxon>
        <taxon>Bacilli</taxon>
        <taxon>Lactobacillales</taxon>
        <taxon>Streptococcaceae</taxon>
        <taxon>Streptococcus</taxon>
    </lineage>
</organism>
<feature type="chain" id="PRO_1000176999" description="Large ribosomal subunit protein bL31B">
    <location>
        <begin position="1"/>
        <end position="80"/>
    </location>
</feature>
<name>RL31B_STRZT</name>
<evidence type="ECO:0000255" key="1">
    <source>
        <dbReference type="HAMAP-Rule" id="MF_00502"/>
    </source>
</evidence>
<evidence type="ECO:0000305" key="2"/>
<dbReference type="EMBL" id="CP000921">
    <property type="protein sequence ID" value="ACO24116.1"/>
    <property type="molecule type" value="Genomic_DNA"/>
</dbReference>
<dbReference type="RefSeq" id="WP_000710764.1">
    <property type="nucleotide sequence ID" value="NC_012469.1"/>
</dbReference>
<dbReference type="SMR" id="C1CR07"/>
<dbReference type="KEGG" id="snt:SPT_0927"/>
<dbReference type="HOGENOM" id="CLU_114306_2_2_9"/>
<dbReference type="GO" id="GO:1990904">
    <property type="term" value="C:ribonucleoprotein complex"/>
    <property type="evidence" value="ECO:0007669"/>
    <property type="project" value="UniProtKB-KW"/>
</dbReference>
<dbReference type="GO" id="GO:0005840">
    <property type="term" value="C:ribosome"/>
    <property type="evidence" value="ECO:0007669"/>
    <property type="project" value="UniProtKB-KW"/>
</dbReference>
<dbReference type="GO" id="GO:0003735">
    <property type="term" value="F:structural constituent of ribosome"/>
    <property type="evidence" value="ECO:0007669"/>
    <property type="project" value="InterPro"/>
</dbReference>
<dbReference type="GO" id="GO:0006412">
    <property type="term" value="P:translation"/>
    <property type="evidence" value="ECO:0007669"/>
    <property type="project" value="UniProtKB-UniRule"/>
</dbReference>
<dbReference type="Gene3D" id="4.10.830.30">
    <property type="entry name" value="Ribosomal protein L31"/>
    <property type="match status" value="1"/>
</dbReference>
<dbReference type="HAMAP" id="MF_00502">
    <property type="entry name" value="Ribosomal_bL31_2"/>
    <property type="match status" value="1"/>
</dbReference>
<dbReference type="InterPro" id="IPR034704">
    <property type="entry name" value="Ribosomal_bL28/bL31-like_sf"/>
</dbReference>
<dbReference type="InterPro" id="IPR002150">
    <property type="entry name" value="Ribosomal_bL31"/>
</dbReference>
<dbReference type="InterPro" id="IPR027493">
    <property type="entry name" value="Ribosomal_bL31_B"/>
</dbReference>
<dbReference type="InterPro" id="IPR042105">
    <property type="entry name" value="Ribosomal_bL31_sf"/>
</dbReference>
<dbReference type="NCBIfam" id="TIGR00105">
    <property type="entry name" value="L31"/>
    <property type="match status" value="1"/>
</dbReference>
<dbReference type="NCBIfam" id="NF002462">
    <property type="entry name" value="PRK01678.1"/>
    <property type="match status" value="1"/>
</dbReference>
<dbReference type="PANTHER" id="PTHR33280">
    <property type="entry name" value="50S RIBOSOMAL PROTEIN L31, CHLOROPLASTIC"/>
    <property type="match status" value="1"/>
</dbReference>
<dbReference type="PANTHER" id="PTHR33280:SF1">
    <property type="entry name" value="LARGE RIBOSOMAL SUBUNIT PROTEIN BL31C"/>
    <property type="match status" value="1"/>
</dbReference>
<dbReference type="Pfam" id="PF01197">
    <property type="entry name" value="Ribosomal_L31"/>
    <property type="match status" value="1"/>
</dbReference>
<dbReference type="PRINTS" id="PR01249">
    <property type="entry name" value="RIBOSOMALL31"/>
</dbReference>
<dbReference type="SUPFAM" id="SSF143800">
    <property type="entry name" value="L28p-like"/>
    <property type="match status" value="1"/>
</dbReference>
<dbReference type="PROSITE" id="PS01143">
    <property type="entry name" value="RIBOSOMAL_L31"/>
    <property type="match status" value="1"/>
</dbReference>
<proteinExistence type="inferred from homology"/>
<accession>C1CR07</accession>